<comment type="function">
    <text evidence="5">Involved in the biosynthesis of (S)-coclaurine, the common precursor of all benzylisoquinoline alkaloids such as morphine, sanguinarine, codeine or papaverine. Condenses dopamine and 4-hydroxyphenylacetaldehyde.</text>
</comment>
<comment type="catalytic activity">
    <reaction evidence="5">
        <text>(4-hydroxyphenyl)acetaldehyde + dopamine = (S)-norcoclaurine + H2O</text>
        <dbReference type="Rhea" id="RHEA:16173"/>
        <dbReference type="ChEBI" id="CHEBI:15377"/>
        <dbReference type="ChEBI" id="CHEBI:15621"/>
        <dbReference type="ChEBI" id="CHEBI:58253"/>
        <dbReference type="ChEBI" id="CHEBI:59905"/>
        <dbReference type="EC" id="3.5.99.14"/>
    </reaction>
</comment>
<comment type="activity regulation">
    <text evidence="4">Activity doubles within 5 hours of elicitor treatment and continues to increase for at least 80 hours.</text>
</comment>
<comment type="biophysicochemical properties">
    <kinetics>
        <KM evidence="4">1.02 mM for 4-hydroxyphenylacetaldehyde</KM>
        <text evidence="4">Sigmoidal saturation kinetics suggesting positive cooperativity in the binding of dopamine.</text>
    </kinetics>
    <phDependence>
        <text evidence="4">Optimum pH is between 6.5 and 7.0.</text>
    </phDependence>
    <temperatureDependence>
        <text evidence="4">Optimum temperature is 50 degrees Celsius.</text>
    </temperatureDependence>
</comment>
<comment type="pathway">
    <text>Alkaloid biosynthesis; (S)-reticuline biosynthesis.</text>
</comment>
<comment type="subcellular location">
    <subcellularLocation>
        <location evidence="3">Membrane</location>
        <topology evidence="3">Single-pass membrane protein</topology>
    </subcellularLocation>
</comment>
<comment type="tissue specificity">
    <text evidence="4">Detected in roots, stems, leaves, flower buds and germinating seeds.</text>
</comment>
<comment type="similarity">
    <text evidence="7">Belongs to the BetVI family.</text>
</comment>
<comment type="caution">
    <text evidence="7">The tissue specificity and the characterization shown in PubMed:11722126 are from a soluble protein extract not making the distinction between the two proteins produced by NCS1 and NCS2.</text>
</comment>
<gene>
    <name evidence="6" type="primary">NCS1</name>
</gene>
<sequence length="231" mass="26015">MSKLITTEPLKSMAEVISNYAMKQQSVSERNIPKKQSLLRKEITYETEVQTSADSIWNVYSSPDIPRLLRDVLLPGVFEKLDVIAGNGGVGTVLDIAFPLGAVPRRYKEKFVKINHEKRLKEVVMIEGGYLDMGCTFYMDRIHIFEKTPNSCVIESSIIYEVKEEYAGKMAKLITTEPLESMAEVISGYVLKKRLQVFGFEIKPKLRFNLLLCLIICLVIAGGMFVAGVPL</sequence>
<reference key="1">
    <citation type="journal article" date="2005" name="Phytochemistry">
        <title>Evidence for the monophyletic evolution of benzylisoquinoline alkaloid biosynthesis in angiosperms.</title>
        <authorList>
            <person name="Liscombe D.K."/>
            <person name="Macleod B.P."/>
            <person name="Loukanina N."/>
            <person name="Nandi O.I."/>
            <person name="Facchini P.J."/>
        </authorList>
    </citation>
    <scope>NUCLEOTIDE SEQUENCE [MRNA]</scope>
    <scope>FUNCTION</scope>
    <scope>CATALYTIC ACTIVITY</scope>
</reference>
<reference key="2">
    <citation type="journal article" date="2001" name="Planta">
        <title>Isolation and partial characterization of norcoclaurine synthase, the first committed step in benzylisoquinoline alkaloid biosynthesis, from opium poppy.</title>
        <authorList>
            <person name="Samanani N."/>
            <person name="Facchini P.J."/>
        </authorList>
    </citation>
    <scope>TISSUE SPECIFICITY</scope>
    <scope>ACTIVITY REGULATION</scope>
    <scope>BIOPHYSICOCHEMICAL PROPERTIES</scope>
</reference>
<accession>Q4QTJ2</accession>
<proteinExistence type="evidence at protein level"/>
<evidence type="ECO:0000250" key="1">
    <source>
        <dbReference type="UniProtKB" id="Q4QTJ1"/>
    </source>
</evidence>
<evidence type="ECO:0000250" key="2">
    <source>
        <dbReference type="UniProtKB" id="Q67A25"/>
    </source>
</evidence>
<evidence type="ECO:0000255" key="3"/>
<evidence type="ECO:0000269" key="4">
    <source>
    </source>
</evidence>
<evidence type="ECO:0000269" key="5">
    <source>
    </source>
</evidence>
<evidence type="ECO:0000303" key="6">
    <source>
    </source>
</evidence>
<evidence type="ECO:0000305" key="7"/>
<evidence type="ECO:0000312" key="8">
    <source>
        <dbReference type="EMBL" id="AAX56303.1"/>
    </source>
</evidence>
<organism evidence="8">
    <name type="scientific">Papaver somniferum</name>
    <name type="common">Opium poppy</name>
    <dbReference type="NCBI Taxonomy" id="3469"/>
    <lineage>
        <taxon>Eukaryota</taxon>
        <taxon>Viridiplantae</taxon>
        <taxon>Streptophyta</taxon>
        <taxon>Embryophyta</taxon>
        <taxon>Tracheophyta</taxon>
        <taxon>Spermatophyta</taxon>
        <taxon>Magnoliopsida</taxon>
        <taxon>Ranunculales</taxon>
        <taxon>Papaveraceae</taxon>
        <taxon>Papaveroideae</taxon>
        <taxon>Papaver</taxon>
    </lineage>
</organism>
<dbReference type="EC" id="3.5.99.14" evidence="5"/>
<dbReference type="EMBL" id="AY860500">
    <property type="protein sequence ID" value="AAX56303.1"/>
    <property type="molecule type" value="mRNA"/>
</dbReference>
<dbReference type="SMR" id="Q4QTJ2"/>
<dbReference type="BRENDA" id="4.2.1.78">
    <property type="organism ID" value="4515"/>
</dbReference>
<dbReference type="UniPathway" id="UPA00306"/>
<dbReference type="GO" id="GO:0005737">
    <property type="term" value="C:cytoplasm"/>
    <property type="evidence" value="ECO:0007669"/>
    <property type="project" value="TreeGrafter"/>
</dbReference>
<dbReference type="GO" id="GO:0016020">
    <property type="term" value="C:membrane"/>
    <property type="evidence" value="ECO:0007669"/>
    <property type="project" value="UniProtKB-SubCell"/>
</dbReference>
<dbReference type="GO" id="GO:0005634">
    <property type="term" value="C:nucleus"/>
    <property type="evidence" value="ECO:0007669"/>
    <property type="project" value="TreeGrafter"/>
</dbReference>
<dbReference type="GO" id="GO:0050474">
    <property type="term" value="F:(S)-norcoclaurine synthase activity"/>
    <property type="evidence" value="ECO:0000314"/>
    <property type="project" value="UniProtKB"/>
</dbReference>
<dbReference type="GO" id="GO:0010427">
    <property type="term" value="F:abscisic acid binding"/>
    <property type="evidence" value="ECO:0007669"/>
    <property type="project" value="TreeGrafter"/>
</dbReference>
<dbReference type="GO" id="GO:0004864">
    <property type="term" value="F:protein phosphatase inhibitor activity"/>
    <property type="evidence" value="ECO:0007669"/>
    <property type="project" value="TreeGrafter"/>
</dbReference>
<dbReference type="GO" id="GO:0038023">
    <property type="term" value="F:signaling receptor activity"/>
    <property type="evidence" value="ECO:0007669"/>
    <property type="project" value="TreeGrafter"/>
</dbReference>
<dbReference type="GO" id="GO:0009738">
    <property type="term" value="P:abscisic acid-activated signaling pathway"/>
    <property type="evidence" value="ECO:0007669"/>
    <property type="project" value="TreeGrafter"/>
</dbReference>
<dbReference type="GO" id="GO:0009820">
    <property type="term" value="P:alkaloid metabolic process"/>
    <property type="evidence" value="ECO:0007669"/>
    <property type="project" value="UniProtKB-KW"/>
</dbReference>
<dbReference type="GO" id="GO:0006952">
    <property type="term" value="P:defense response"/>
    <property type="evidence" value="ECO:0007669"/>
    <property type="project" value="InterPro"/>
</dbReference>
<dbReference type="CDD" id="cd07816">
    <property type="entry name" value="Bet_v1-like"/>
    <property type="match status" value="1"/>
</dbReference>
<dbReference type="Gene3D" id="3.30.530.20">
    <property type="match status" value="1"/>
</dbReference>
<dbReference type="InterPro" id="IPR000916">
    <property type="entry name" value="Bet_v_I/MLP"/>
</dbReference>
<dbReference type="InterPro" id="IPR050279">
    <property type="entry name" value="Plant_def-hormone_signal"/>
</dbReference>
<dbReference type="InterPro" id="IPR023393">
    <property type="entry name" value="START-like_dom_sf"/>
</dbReference>
<dbReference type="PANTHER" id="PTHR31213:SF19">
    <property type="entry name" value="BET V I_MAJOR LATEX PROTEIN DOMAIN-CONTAINING PROTEIN"/>
    <property type="match status" value="1"/>
</dbReference>
<dbReference type="PANTHER" id="PTHR31213">
    <property type="entry name" value="OS08G0374000 PROTEIN-RELATED"/>
    <property type="match status" value="1"/>
</dbReference>
<dbReference type="Pfam" id="PF00407">
    <property type="entry name" value="Bet_v_1"/>
    <property type="match status" value="1"/>
</dbReference>
<dbReference type="SUPFAM" id="SSF55961">
    <property type="entry name" value="Bet v1-like"/>
    <property type="match status" value="1"/>
</dbReference>
<feature type="signal peptide" evidence="1">
    <location>
        <begin position="1"/>
        <end status="unknown"/>
    </location>
</feature>
<feature type="chain" id="PRO_0000433979" description="S-norcoclaurine synthase 1">
    <location>
        <begin status="unknown"/>
        <end position="231"/>
    </location>
</feature>
<feature type="transmembrane region" description="Helical" evidence="3">
    <location>
        <begin position="210"/>
        <end position="230"/>
    </location>
</feature>
<feature type="active site" description="Proton donor" evidence="2">
    <location>
        <position position="121"/>
    </location>
</feature>
<feature type="binding site" evidence="2">
    <location>
        <begin position="107"/>
        <end position="109"/>
    </location>
    <ligand>
        <name>dopamine</name>
        <dbReference type="ChEBI" id="CHEBI:59905"/>
    </ligand>
</feature>
<feature type="binding site" evidence="2">
    <location>
        <position position="140"/>
    </location>
    <ligand>
        <name>(4-hydroxyphenyl)acetaldehyde</name>
        <dbReference type="ChEBI" id="CHEBI:15621"/>
    </ligand>
</feature>
<protein>
    <recommendedName>
        <fullName evidence="6">S-norcoclaurine synthase 1</fullName>
        <shortName evidence="6">PsNCS1</shortName>
        <ecNumber evidence="5">3.5.99.14</ecNumber>
    </recommendedName>
</protein>
<name>NCS1_PAPSO</name>
<keyword id="KW-0017">Alkaloid metabolism</keyword>
<keyword id="KW-0378">Hydrolase</keyword>
<keyword id="KW-0472">Membrane</keyword>
<keyword id="KW-0732">Signal</keyword>
<keyword id="KW-0812">Transmembrane</keyword>
<keyword id="KW-1133">Transmembrane helix</keyword>